<evidence type="ECO:0000256" key="1">
    <source>
        <dbReference type="SAM" id="MobiDB-lite"/>
    </source>
</evidence>
<evidence type="ECO:0000305" key="2"/>
<keyword id="KW-1185">Reference proteome</keyword>
<keyword id="KW-0687">Ribonucleoprotein</keyword>
<keyword id="KW-0689">Ribosomal protein</keyword>
<comment type="similarity">
    <text evidence="2">Belongs to the bacterial ribosomal protein bL34 family.</text>
</comment>
<proteinExistence type="inferred from homology"/>
<feature type="chain" id="PRO_0000187490" description="Large ribosomal subunit protein bL34">
    <location>
        <begin position="1"/>
        <end position="44"/>
    </location>
</feature>
<feature type="region of interest" description="Disordered" evidence="1">
    <location>
        <begin position="1"/>
        <end position="44"/>
    </location>
</feature>
<gene>
    <name type="primary">rpmH</name>
    <name type="ordered locus">TM_1463.1</name>
</gene>
<sequence>MKRTYQPSRRKRKRTHGFLARKRTPGGRRVLKNRRRKGRWRLTV</sequence>
<protein>
    <recommendedName>
        <fullName evidence="2">Large ribosomal subunit protein bL34</fullName>
    </recommendedName>
    <alternativeName>
        <fullName>50S ribosomal protein L34</fullName>
    </alternativeName>
</protein>
<dbReference type="EMBL" id="AF411294">
    <property type="protein sequence ID" value="AAL05866.1"/>
    <property type="molecule type" value="Genomic_DNA"/>
</dbReference>
<dbReference type="EMBL" id="AE000512">
    <property type="status" value="NOT_ANNOTATED_CDS"/>
    <property type="molecule type" value="Genomic_DNA"/>
</dbReference>
<dbReference type="RefSeq" id="NP_229263.1">
    <property type="nucleotide sequence ID" value="NC_000853.1"/>
</dbReference>
<dbReference type="RefSeq" id="WP_004081758.1">
    <property type="nucleotide sequence ID" value="NZ_CP011107.1"/>
</dbReference>
<dbReference type="SMR" id="P58288"/>
<dbReference type="FunCoup" id="P58288">
    <property type="interactions" value="215"/>
</dbReference>
<dbReference type="PaxDb" id="243274-THEMA_06995"/>
<dbReference type="KEGG" id="tmi:THEMA_06995"/>
<dbReference type="KEGG" id="tmm:Tmari_1470"/>
<dbReference type="KEGG" id="tmw:THMA_1494"/>
<dbReference type="eggNOG" id="COG0230">
    <property type="taxonomic scope" value="Bacteria"/>
</dbReference>
<dbReference type="InParanoid" id="P58288"/>
<dbReference type="Proteomes" id="UP000008183">
    <property type="component" value="Chromosome"/>
</dbReference>
<dbReference type="GO" id="GO:1990904">
    <property type="term" value="C:ribonucleoprotein complex"/>
    <property type="evidence" value="ECO:0007669"/>
    <property type="project" value="UniProtKB-KW"/>
</dbReference>
<dbReference type="GO" id="GO:0005840">
    <property type="term" value="C:ribosome"/>
    <property type="evidence" value="ECO:0007669"/>
    <property type="project" value="UniProtKB-KW"/>
</dbReference>
<dbReference type="GO" id="GO:0003735">
    <property type="term" value="F:structural constituent of ribosome"/>
    <property type="evidence" value="ECO:0007669"/>
    <property type="project" value="InterPro"/>
</dbReference>
<dbReference type="GO" id="GO:0006412">
    <property type="term" value="P:translation"/>
    <property type="evidence" value="ECO:0007669"/>
    <property type="project" value="UniProtKB-UniRule"/>
</dbReference>
<dbReference type="FunFam" id="1.10.287.3980:FF:000001">
    <property type="entry name" value="Mitochondrial ribosomal protein L34"/>
    <property type="match status" value="1"/>
</dbReference>
<dbReference type="Gene3D" id="1.10.287.3980">
    <property type="match status" value="1"/>
</dbReference>
<dbReference type="HAMAP" id="MF_00391">
    <property type="entry name" value="Ribosomal_bL34"/>
    <property type="match status" value="1"/>
</dbReference>
<dbReference type="InterPro" id="IPR000271">
    <property type="entry name" value="Ribosomal_bL34"/>
</dbReference>
<dbReference type="InterPro" id="IPR020939">
    <property type="entry name" value="Ribosomal_bL34_CS"/>
</dbReference>
<dbReference type="NCBIfam" id="TIGR01030">
    <property type="entry name" value="rpmH_bact"/>
    <property type="match status" value="1"/>
</dbReference>
<dbReference type="PANTHER" id="PTHR14503:SF4">
    <property type="entry name" value="LARGE RIBOSOMAL SUBUNIT PROTEIN BL34M"/>
    <property type="match status" value="1"/>
</dbReference>
<dbReference type="PANTHER" id="PTHR14503">
    <property type="entry name" value="MITOCHONDRIAL RIBOSOMAL PROTEIN 34 FAMILY MEMBER"/>
    <property type="match status" value="1"/>
</dbReference>
<dbReference type="Pfam" id="PF00468">
    <property type="entry name" value="Ribosomal_L34"/>
    <property type="match status" value="1"/>
</dbReference>
<dbReference type="PROSITE" id="PS00784">
    <property type="entry name" value="RIBOSOMAL_L34"/>
    <property type="match status" value="1"/>
</dbReference>
<organism>
    <name type="scientific">Thermotoga maritima (strain ATCC 43589 / DSM 3109 / JCM 10099 / NBRC 100826 / MSB8)</name>
    <dbReference type="NCBI Taxonomy" id="243274"/>
    <lineage>
        <taxon>Bacteria</taxon>
        <taxon>Thermotogati</taxon>
        <taxon>Thermotogota</taxon>
        <taxon>Thermotogae</taxon>
        <taxon>Thermotogales</taxon>
        <taxon>Thermotogaceae</taxon>
        <taxon>Thermotoga</taxon>
    </lineage>
</organism>
<accession>P58288</accession>
<name>RL34_THEMA</name>
<reference key="1">
    <citation type="submission" date="2001-08" db="EMBL/GenBank/DDBJ databases">
        <title>Ribosomal protein L34.</title>
        <authorList>
            <person name="Jovanovic M."/>
            <person name="Gopalan V."/>
        </authorList>
    </citation>
    <scope>NUCLEOTIDE SEQUENCE [GENOMIC DNA]</scope>
</reference>
<reference key="2">
    <citation type="journal article" date="1999" name="Nature">
        <title>Evidence for lateral gene transfer between Archaea and Bacteria from genome sequence of Thermotoga maritima.</title>
        <authorList>
            <person name="Nelson K.E."/>
            <person name="Clayton R.A."/>
            <person name="Gill S.R."/>
            <person name="Gwinn M.L."/>
            <person name="Dodson R.J."/>
            <person name="Haft D.H."/>
            <person name="Hickey E.K."/>
            <person name="Peterson J.D."/>
            <person name="Nelson W.C."/>
            <person name="Ketchum K.A."/>
            <person name="McDonald L.A."/>
            <person name="Utterback T.R."/>
            <person name="Malek J.A."/>
            <person name="Linher K.D."/>
            <person name="Garrett M.M."/>
            <person name="Stewart A.M."/>
            <person name="Cotton M.D."/>
            <person name="Pratt M.S."/>
            <person name="Phillips C.A."/>
            <person name="Richardson D.L."/>
            <person name="Heidelberg J.F."/>
            <person name="Sutton G.G."/>
            <person name="Fleischmann R.D."/>
            <person name="Eisen J.A."/>
            <person name="White O."/>
            <person name="Salzberg S.L."/>
            <person name="Smith H.O."/>
            <person name="Venter J.C."/>
            <person name="Fraser C.M."/>
        </authorList>
    </citation>
    <scope>NUCLEOTIDE SEQUENCE [LARGE SCALE GENOMIC DNA]</scope>
    <source>
        <strain>ATCC 43589 / DSM 3109 / JCM 10099 / NBRC 100826 / MSB8</strain>
    </source>
</reference>